<comment type="function">
    <text evidence="1">Binds directly to 23S rRNA. The L1 stalk is quite mobile in the ribosome, and is involved in E site tRNA release.</text>
</comment>
<comment type="function">
    <text evidence="1">Protein L1 is also a translational repressor protein, it controls the translation of the L11 operon by binding to its mRNA.</text>
</comment>
<comment type="subunit">
    <text evidence="1">Part of the 50S ribosomal subunit.</text>
</comment>
<comment type="similarity">
    <text evidence="1">Belongs to the universal ribosomal protein uL1 family.</text>
</comment>
<feature type="chain" id="PRO_1000141486" description="Large ribosomal subunit protein uL1">
    <location>
        <begin position="1"/>
        <end position="234"/>
    </location>
</feature>
<keyword id="KW-0678">Repressor</keyword>
<keyword id="KW-0687">Ribonucleoprotein</keyword>
<keyword id="KW-0689">Ribosomal protein</keyword>
<keyword id="KW-0694">RNA-binding</keyword>
<keyword id="KW-0699">rRNA-binding</keyword>
<keyword id="KW-0810">Translation regulation</keyword>
<keyword id="KW-0820">tRNA-binding</keyword>
<gene>
    <name evidence="1" type="primary">rplA</name>
    <name type="ordered locus">YPTS_0300</name>
</gene>
<accession>B2K109</accession>
<evidence type="ECO:0000255" key="1">
    <source>
        <dbReference type="HAMAP-Rule" id="MF_01318"/>
    </source>
</evidence>
<evidence type="ECO:0000305" key="2"/>
<organism>
    <name type="scientific">Yersinia pseudotuberculosis serotype IB (strain PB1/+)</name>
    <dbReference type="NCBI Taxonomy" id="502801"/>
    <lineage>
        <taxon>Bacteria</taxon>
        <taxon>Pseudomonadati</taxon>
        <taxon>Pseudomonadota</taxon>
        <taxon>Gammaproteobacteria</taxon>
        <taxon>Enterobacterales</taxon>
        <taxon>Yersiniaceae</taxon>
        <taxon>Yersinia</taxon>
    </lineage>
</organism>
<dbReference type="EMBL" id="CP001048">
    <property type="protein sequence ID" value="ACC87291.1"/>
    <property type="molecule type" value="Genomic_DNA"/>
</dbReference>
<dbReference type="RefSeq" id="WP_002210673.1">
    <property type="nucleotide sequence ID" value="NZ_CP009780.1"/>
</dbReference>
<dbReference type="SMR" id="B2K109"/>
<dbReference type="GeneID" id="57974968"/>
<dbReference type="KEGG" id="ypb:YPTS_0300"/>
<dbReference type="PATRIC" id="fig|502801.10.peg.3975"/>
<dbReference type="GO" id="GO:0022625">
    <property type="term" value="C:cytosolic large ribosomal subunit"/>
    <property type="evidence" value="ECO:0007669"/>
    <property type="project" value="TreeGrafter"/>
</dbReference>
<dbReference type="GO" id="GO:0019843">
    <property type="term" value="F:rRNA binding"/>
    <property type="evidence" value="ECO:0007669"/>
    <property type="project" value="UniProtKB-UniRule"/>
</dbReference>
<dbReference type="GO" id="GO:0003735">
    <property type="term" value="F:structural constituent of ribosome"/>
    <property type="evidence" value="ECO:0007669"/>
    <property type="project" value="InterPro"/>
</dbReference>
<dbReference type="GO" id="GO:0000049">
    <property type="term" value="F:tRNA binding"/>
    <property type="evidence" value="ECO:0007669"/>
    <property type="project" value="UniProtKB-KW"/>
</dbReference>
<dbReference type="GO" id="GO:0006417">
    <property type="term" value="P:regulation of translation"/>
    <property type="evidence" value="ECO:0007669"/>
    <property type="project" value="UniProtKB-KW"/>
</dbReference>
<dbReference type="GO" id="GO:0006412">
    <property type="term" value="P:translation"/>
    <property type="evidence" value="ECO:0007669"/>
    <property type="project" value="UniProtKB-UniRule"/>
</dbReference>
<dbReference type="CDD" id="cd00403">
    <property type="entry name" value="Ribosomal_L1"/>
    <property type="match status" value="1"/>
</dbReference>
<dbReference type="FunFam" id="3.40.50.790:FF:000001">
    <property type="entry name" value="50S ribosomal protein L1"/>
    <property type="match status" value="1"/>
</dbReference>
<dbReference type="Gene3D" id="3.30.190.20">
    <property type="match status" value="1"/>
</dbReference>
<dbReference type="Gene3D" id="3.40.50.790">
    <property type="match status" value="1"/>
</dbReference>
<dbReference type="HAMAP" id="MF_01318_B">
    <property type="entry name" value="Ribosomal_uL1_B"/>
    <property type="match status" value="1"/>
</dbReference>
<dbReference type="InterPro" id="IPR005878">
    <property type="entry name" value="Ribosom_uL1_bac-type"/>
</dbReference>
<dbReference type="InterPro" id="IPR002143">
    <property type="entry name" value="Ribosomal_uL1"/>
</dbReference>
<dbReference type="InterPro" id="IPR023674">
    <property type="entry name" value="Ribosomal_uL1-like"/>
</dbReference>
<dbReference type="InterPro" id="IPR028364">
    <property type="entry name" value="Ribosomal_uL1/biogenesis"/>
</dbReference>
<dbReference type="InterPro" id="IPR016095">
    <property type="entry name" value="Ribosomal_uL1_3-a/b-sand"/>
</dbReference>
<dbReference type="InterPro" id="IPR023673">
    <property type="entry name" value="Ribosomal_uL1_CS"/>
</dbReference>
<dbReference type="NCBIfam" id="TIGR01169">
    <property type="entry name" value="rplA_bact"/>
    <property type="match status" value="1"/>
</dbReference>
<dbReference type="PANTHER" id="PTHR36427">
    <property type="entry name" value="54S RIBOSOMAL PROTEIN L1, MITOCHONDRIAL"/>
    <property type="match status" value="1"/>
</dbReference>
<dbReference type="PANTHER" id="PTHR36427:SF3">
    <property type="entry name" value="LARGE RIBOSOMAL SUBUNIT PROTEIN UL1M"/>
    <property type="match status" value="1"/>
</dbReference>
<dbReference type="Pfam" id="PF00687">
    <property type="entry name" value="Ribosomal_L1"/>
    <property type="match status" value="1"/>
</dbReference>
<dbReference type="PIRSF" id="PIRSF002155">
    <property type="entry name" value="Ribosomal_L1"/>
    <property type="match status" value="1"/>
</dbReference>
<dbReference type="SUPFAM" id="SSF56808">
    <property type="entry name" value="Ribosomal protein L1"/>
    <property type="match status" value="1"/>
</dbReference>
<dbReference type="PROSITE" id="PS01199">
    <property type="entry name" value="RIBOSOMAL_L1"/>
    <property type="match status" value="1"/>
</dbReference>
<proteinExistence type="inferred from homology"/>
<sequence>MAKLTKRMRVIRDKVDVTKQYDINEAVALLKELATAKFVESVDVAVNLGIDARKSDQNVRGATVLPHGTGRSVRVAVFAQGANAEAAKEAGAELVGMDDLADQIKKGEMNFDVVIASPDAMRVVGQLGQILGPRGLMPNPKVGTVTPNVAEAVKNAKAGQVRYRNDKNGIIHTTIGKVDFDSDKLKENLESLVVALKKAKPATAKGIYIKKISLSTTMGAGVAIDQSGLTAVVN</sequence>
<reference key="1">
    <citation type="submission" date="2008-04" db="EMBL/GenBank/DDBJ databases">
        <title>Complete sequence of Yersinia pseudotuberculosis PB1/+.</title>
        <authorList>
            <person name="Copeland A."/>
            <person name="Lucas S."/>
            <person name="Lapidus A."/>
            <person name="Glavina del Rio T."/>
            <person name="Dalin E."/>
            <person name="Tice H."/>
            <person name="Bruce D."/>
            <person name="Goodwin L."/>
            <person name="Pitluck S."/>
            <person name="Munk A.C."/>
            <person name="Brettin T."/>
            <person name="Detter J.C."/>
            <person name="Han C."/>
            <person name="Tapia R."/>
            <person name="Schmutz J."/>
            <person name="Larimer F."/>
            <person name="Land M."/>
            <person name="Hauser L."/>
            <person name="Challacombe J.F."/>
            <person name="Green L."/>
            <person name="Lindler L.E."/>
            <person name="Nikolich M.P."/>
            <person name="Richardson P."/>
        </authorList>
    </citation>
    <scope>NUCLEOTIDE SEQUENCE [LARGE SCALE GENOMIC DNA]</scope>
    <source>
        <strain>PB1/+</strain>
    </source>
</reference>
<name>RL1_YERPB</name>
<protein>
    <recommendedName>
        <fullName evidence="1">Large ribosomal subunit protein uL1</fullName>
    </recommendedName>
    <alternativeName>
        <fullName evidence="2">50S ribosomal protein L1</fullName>
    </alternativeName>
</protein>